<name>URIC_HALVD</name>
<sequence>MNYGKENVAVYRTYATPLEGVRTIPESSFDGRDNVLFGLDVRVQVEGEEFLPSFSEGDNTKVVATDSMKNFILHHAGEYDGATLEGFLEFVGSGFLDTYSQMSAVEVSADEIRFDELPVPEDDGDGYEASDLVFRVSDNESGYGSISLTRDDGTPVITDQTSGVTGLELVKVEGSSFTGYVQDEYTTLPEREDRTLYISLDIFWSYDDPEDALGEDPERYVPSEQVRDIAHVVFDEVDSNSIQDLIYQIGLRVLERYPQLASVRFEANNRTWLSVRDDLDGDASVLREPPAPTGFQQFSMDRGDLDEQ</sequence>
<dbReference type="EC" id="1.7.3.3"/>
<dbReference type="EMBL" id="CP001953">
    <property type="protein sequence ID" value="ADE01314.1"/>
    <property type="molecule type" value="Genomic_DNA"/>
</dbReference>
<dbReference type="SMR" id="D4GPU7"/>
<dbReference type="PaxDb" id="309800-C498_02155"/>
<dbReference type="EnsemblBacteria" id="ADE01314">
    <property type="protein sequence ID" value="ADE01314"/>
    <property type="gene ID" value="HVO_B0300"/>
</dbReference>
<dbReference type="KEGG" id="hvo:HVO_B0300"/>
<dbReference type="eggNOG" id="arCOG11422">
    <property type="taxonomic scope" value="Archaea"/>
</dbReference>
<dbReference type="HOGENOM" id="CLU_048151_0_0_2"/>
<dbReference type="UniPathway" id="UPA00394">
    <property type="reaction ID" value="UER00650"/>
</dbReference>
<dbReference type="Proteomes" id="UP000008243">
    <property type="component" value="Plasmid pHV3"/>
</dbReference>
<dbReference type="GO" id="GO:0004846">
    <property type="term" value="F:urate oxidase activity"/>
    <property type="evidence" value="ECO:0007669"/>
    <property type="project" value="UniProtKB-EC"/>
</dbReference>
<dbReference type="GO" id="GO:0006145">
    <property type="term" value="P:purine nucleobase catabolic process"/>
    <property type="evidence" value="ECO:0007669"/>
    <property type="project" value="TreeGrafter"/>
</dbReference>
<dbReference type="GO" id="GO:0019628">
    <property type="term" value="P:urate catabolic process"/>
    <property type="evidence" value="ECO:0007669"/>
    <property type="project" value="UniProtKB-UniPathway"/>
</dbReference>
<dbReference type="Gene3D" id="3.10.270.10">
    <property type="entry name" value="Urate Oxidase"/>
    <property type="match status" value="1"/>
</dbReference>
<dbReference type="InterPro" id="IPR002042">
    <property type="entry name" value="Uricase"/>
</dbReference>
<dbReference type="NCBIfam" id="TIGR03383">
    <property type="entry name" value="urate_oxi"/>
    <property type="match status" value="1"/>
</dbReference>
<dbReference type="PANTHER" id="PTHR42874">
    <property type="entry name" value="URICASE"/>
    <property type="match status" value="1"/>
</dbReference>
<dbReference type="PANTHER" id="PTHR42874:SF1">
    <property type="entry name" value="URICASE"/>
    <property type="match status" value="1"/>
</dbReference>
<dbReference type="Pfam" id="PF01014">
    <property type="entry name" value="Uricase"/>
    <property type="match status" value="2"/>
</dbReference>
<dbReference type="PIRSF" id="PIRSF000241">
    <property type="entry name" value="Urate_oxidase"/>
    <property type="match status" value="1"/>
</dbReference>
<dbReference type="PRINTS" id="PR00093">
    <property type="entry name" value="URICASE"/>
</dbReference>
<dbReference type="SUPFAM" id="SSF55620">
    <property type="entry name" value="Tetrahydrobiopterin biosynthesis enzymes-like"/>
    <property type="match status" value="2"/>
</dbReference>
<protein>
    <recommendedName>
        <fullName>Uricase</fullName>
        <ecNumber>1.7.3.3</ecNumber>
    </recommendedName>
    <alternativeName>
        <fullName>Urate oxidase</fullName>
    </alternativeName>
</protein>
<keyword id="KW-0560">Oxidoreductase</keyword>
<keyword id="KW-0614">Plasmid</keyword>
<keyword id="KW-0659">Purine metabolism</keyword>
<keyword id="KW-1185">Reference proteome</keyword>
<accession>D4GPU7</accession>
<comment type="function">
    <text evidence="1">Catalyzes the oxidation of uric acid to 5-hydroxyisourate, which is further processed to form (S)-allantoin.</text>
</comment>
<comment type="catalytic activity">
    <reaction>
        <text>urate + O2 + H2O = 5-hydroxyisourate + H2O2</text>
        <dbReference type="Rhea" id="RHEA:21368"/>
        <dbReference type="ChEBI" id="CHEBI:15377"/>
        <dbReference type="ChEBI" id="CHEBI:15379"/>
        <dbReference type="ChEBI" id="CHEBI:16240"/>
        <dbReference type="ChEBI" id="CHEBI:17775"/>
        <dbReference type="ChEBI" id="CHEBI:18072"/>
        <dbReference type="EC" id="1.7.3.3"/>
    </reaction>
</comment>
<comment type="pathway">
    <text>Purine metabolism; urate degradation; (S)-allantoin from urate: step 1/3.</text>
</comment>
<comment type="similarity">
    <text evidence="5">Belongs to the uricase family.</text>
</comment>
<organism>
    <name type="scientific">Haloferax volcanii (strain ATCC 29605 / DSM 3757 / JCM 8879 / NBRC 14742 / NCIMB 2012 / VKM B-1768 / DS2)</name>
    <name type="common">Halobacterium volcanii</name>
    <dbReference type="NCBI Taxonomy" id="309800"/>
    <lineage>
        <taxon>Archaea</taxon>
        <taxon>Methanobacteriati</taxon>
        <taxon>Methanobacteriota</taxon>
        <taxon>Stenosarchaea group</taxon>
        <taxon>Halobacteria</taxon>
        <taxon>Halobacteriales</taxon>
        <taxon>Haloferacaceae</taxon>
        <taxon>Haloferax</taxon>
    </lineage>
</organism>
<reference key="1">
    <citation type="journal article" date="2010" name="PLoS ONE">
        <title>The complete genome sequence of Haloferax volcanii DS2, a model archaeon.</title>
        <authorList>
            <person name="Hartman A.L."/>
            <person name="Norais C."/>
            <person name="Badger J.H."/>
            <person name="Delmas S."/>
            <person name="Haldenby S."/>
            <person name="Madupu R."/>
            <person name="Robinson J."/>
            <person name="Khouri H."/>
            <person name="Ren Q."/>
            <person name="Lowe T.M."/>
            <person name="Maupin-Furlow J."/>
            <person name="Pohlschroder M."/>
            <person name="Daniels C."/>
            <person name="Pfeiffer F."/>
            <person name="Allers T."/>
            <person name="Eisen J.A."/>
        </authorList>
    </citation>
    <scope>NUCLEOTIDE SEQUENCE [LARGE SCALE GENOMIC DNA]</scope>
    <source>
        <strain>ATCC 29605 / DSM 3757 / JCM 8879 / NBRC 14742 / NCIMB 2012 / VKM B-1768 / DS2</strain>
    </source>
</reference>
<gene>
    <name type="ordered locus">HVO_B0300</name>
</gene>
<proteinExistence type="inferred from homology"/>
<geneLocation type="plasmid">
    <name>pHV3</name>
</geneLocation>
<feature type="chain" id="PRO_0000411960" description="Uricase">
    <location>
        <begin position="1"/>
        <end position="308"/>
    </location>
</feature>
<feature type="region of interest" description="Disordered" evidence="4">
    <location>
        <begin position="283"/>
        <end position="308"/>
    </location>
</feature>
<feature type="active site" description="Charge relay system" evidence="2">
    <location>
        <position position="5"/>
    </location>
</feature>
<feature type="active site" description="Charge relay system" evidence="2">
    <location>
        <position position="65"/>
    </location>
</feature>
<feature type="binding site" evidence="3">
    <location>
        <position position="65"/>
    </location>
    <ligand>
        <name>urate</name>
        <dbReference type="ChEBI" id="CHEBI:17775"/>
    </ligand>
</feature>
<feature type="binding site" evidence="3">
    <location>
        <position position="66"/>
    </location>
    <ligand>
        <name>urate</name>
        <dbReference type="ChEBI" id="CHEBI:17775"/>
    </ligand>
</feature>
<feature type="binding site" evidence="3">
    <location>
        <position position="177"/>
    </location>
    <ligand>
        <name>urate</name>
        <dbReference type="ChEBI" id="CHEBI:17775"/>
    </ligand>
</feature>
<feature type="binding site" evidence="3">
    <location>
        <position position="194"/>
    </location>
    <ligand>
        <name>urate</name>
        <dbReference type="ChEBI" id="CHEBI:17775"/>
    </ligand>
</feature>
<feature type="binding site" evidence="3">
    <location>
        <position position="242"/>
    </location>
    <ligand>
        <name>urate</name>
        <dbReference type="ChEBI" id="CHEBI:17775"/>
    </ligand>
</feature>
<feature type="binding site" evidence="3">
    <location>
        <position position="243"/>
    </location>
    <ligand>
        <name>urate</name>
        <dbReference type="ChEBI" id="CHEBI:17775"/>
    </ligand>
</feature>
<feature type="binding site" evidence="3">
    <location>
        <position position="269"/>
    </location>
    <ligand>
        <name>urate</name>
        <dbReference type="ChEBI" id="CHEBI:17775"/>
    </ligand>
</feature>
<evidence type="ECO:0000250" key="1"/>
<evidence type="ECO:0000250" key="2">
    <source>
        <dbReference type="UniProtKB" id="D0VWQ1"/>
    </source>
</evidence>
<evidence type="ECO:0000250" key="3">
    <source>
        <dbReference type="UniProtKB" id="Q00511"/>
    </source>
</evidence>
<evidence type="ECO:0000256" key="4">
    <source>
        <dbReference type="SAM" id="MobiDB-lite"/>
    </source>
</evidence>
<evidence type="ECO:0000305" key="5"/>